<dbReference type="EMBL" id="AP011115">
    <property type="protein sequence ID" value="BAH55204.1"/>
    <property type="status" value="ALT_INIT"/>
    <property type="molecule type" value="Genomic_DNA"/>
</dbReference>
<dbReference type="RefSeq" id="WP_005262275.1">
    <property type="nucleotide sequence ID" value="NC_012522.1"/>
</dbReference>
<dbReference type="SMR" id="C1B4L5"/>
<dbReference type="STRING" id="632772.ROP_69570"/>
<dbReference type="GeneID" id="69891589"/>
<dbReference type="KEGG" id="rop:ROP_69570"/>
<dbReference type="PATRIC" id="fig|632772.20.peg.7248"/>
<dbReference type="HOGENOM" id="CLU_053282_0_0_11"/>
<dbReference type="OrthoDB" id="5197218at2"/>
<dbReference type="Proteomes" id="UP000002212">
    <property type="component" value="Chromosome"/>
</dbReference>
<dbReference type="GO" id="GO:0003677">
    <property type="term" value="F:DNA binding"/>
    <property type="evidence" value="ECO:0007669"/>
    <property type="project" value="UniProtKB-UniRule"/>
</dbReference>
<dbReference type="GO" id="GO:0051301">
    <property type="term" value="P:cell division"/>
    <property type="evidence" value="ECO:0007669"/>
    <property type="project" value="UniProtKB-UniRule"/>
</dbReference>
<dbReference type="GO" id="GO:0043937">
    <property type="term" value="P:regulation of sporulation"/>
    <property type="evidence" value="ECO:0007669"/>
    <property type="project" value="InterPro"/>
</dbReference>
<dbReference type="FunFam" id="3.10.28.10:FF:000001">
    <property type="entry name" value="Probable cell division protein WhiA"/>
    <property type="match status" value="1"/>
</dbReference>
<dbReference type="Gene3D" id="3.10.28.10">
    <property type="entry name" value="Homing endonucleases"/>
    <property type="match status" value="1"/>
</dbReference>
<dbReference type="HAMAP" id="MF_01420">
    <property type="entry name" value="HTH_type_WhiA"/>
    <property type="match status" value="1"/>
</dbReference>
<dbReference type="InterPro" id="IPR027434">
    <property type="entry name" value="Homing_endonucl"/>
</dbReference>
<dbReference type="InterPro" id="IPR018478">
    <property type="entry name" value="Sporu_reg_WhiA_N_dom"/>
</dbReference>
<dbReference type="InterPro" id="IPR003802">
    <property type="entry name" value="Sporulation_regulator_WhiA"/>
</dbReference>
<dbReference type="InterPro" id="IPR023054">
    <property type="entry name" value="Sporulation_regulator_WhiA_C"/>
</dbReference>
<dbReference type="InterPro" id="IPR039518">
    <property type="entry name" value="WhiA_LAGLIDADG_dom"/>
</dbReference>
<dbReference type="NCBIfam" id="TIGR00647">
    <property type="entry name" value="DNA_bind_WhiA"/>
    <property type="match status" value="1"/>
</dbReference>
<dbReference type="PANTHER" id="PTHR37307">
    <property type="entry name" value="CELL DIVISION PROTEIN WHIA-RELATED"/>
    <property type="match status" value="1"/>
</dbReference>
<dbReference type="PANTHER" id="PTHR37307:SF1">
    <property type="entry name" value="CELL DIVISION PROTEIN WHIA-RELATED"/>
    <property type="match status" value="1"/>
</dbReference>
<dbReference type="Pfam" id="PF02650">
    <property type="entry name" value="HTH_WhiA"/>
    <property type="match status" value="1"/>
</dbReference>
<dbReference type="Pfam" id="PF14527">
    <property type="entry name" value="LAGLIDADG_WhiA"/>
    <property type="match status" value="1"/>
</dbReference>
<dbReference type="Pfam" id="PF10298">
    <property type="entry name" value="WhiA_N"/>
    <property type="match status" value="1"/>
</dbReference>
<organism>
    <name type="scientific">Rhodococcus opacus (strain B4)</name>
    <dbReference type="NCBI Taxonomy" id="632772"/>
    <lineage>
        <taxon>Bacteria</taxon>
        <taxon>Bacillati</taxon>
        <taxon>Actinomycetota</taxon>
        <taxon>Actinomycetes</taxon>
        <taxon>Mycobacteriales</taxon>
        <taxon>Nocardiaceae</taxon>
        <taxon>Rhodococcus</taxon>
    </lineage>
</organism>
<evidence type="ECO:0000250" key="1">
    <source>
        <dbReference type="UniProtKB" id="P9WF45"/>
    </source>
</evidence>
<evidence type="ECO:0000255" key="2">
    <source>
        <dbReference type="HAMAP-Rule" id="MF_01420"/>
    </source>
</evidence>
<evidence type="ECO:0000256" key="3">
    <source>
        <dbReference type="SAM" id="MobiDB-lite"/>
    </source>
</evidence>
<keyword id="KW-0131">Cell cycle</keyword>
<keyword id="KW-0132">Cell division</keyword>
<keyword id="KW-0238">DNA-binding</keyword>
<protein>
    <recommendedName>
        <fullName evidence="2">Probable cell division protein WhiA</fullName>
    </recommendedName>
</protein>
<accession>C1B4L5</accession>
<gene>
    <name evidence="2" type="primary">whiA</name>
    <name type="ordered locus">ROP_69570</name>
</gene>
<sequence length="327" mass="35077">MAMTAEVKDELSRLVVTHVSCRKAEVSSLLRFAGGLHIVGGRVVVEAEVDLGSTARRLRREIFDLFTYSADVHVLSAGGLRKSSRYIVRVAKEGEALARQTGLLDLRGRPVRGLPAQVVGGSVADAEAAWRGAFLAHGSLTEPGRSSALEVSCPGPEAALALVGAARRLGISAKAREVRGTDRVVIRDGEAIGALLTRMGAQDTRLVWEERRMRREVRATANRLANFDDANLRRSARAAVAAAARVERALDILGDEVPDHLAAAGHLRVEHRQASLEELGQLADPPMTKDAVAGRIRRLLSMADRKAKETGIPDTESAVTADLLDDA</sequence>
<comment type="function">
    <text evidence="2">Involved in cell division and chromosome segregation.</text>
</comment>
<comment type="similarity">
    <text evidence="2">Belongs to the WhiA family.</text>
</comment>
<comment type="sequence caution" evidence="1">
    <conflict type="erroneous initiation">
        <sequence resource="EMBL-CDS" id="BAH55204"/>
    </conflict>
    <text>Truncated N-terminus.</text>
</comment>
<reference key="1">
    <citation type="submission" date="2009-03" db="EMBL/GenBank/DDBJ databases">
        <title>Comparison of the complete genome sequences of Rhodococcus erythropolis PR4 and Rhodococcus opacus B4.</title>
        <authorList>
            <person name="Takarada H."/>
            <person name="Sekine M."/>
            <person name="Hosoyama A."/>
            <person name="Yamada R."/>
            <person name="Fujisawa T."/>
            <person name="Omata S."/>
            <person name="Shimizu A."/>
            <person name="Tsukatani N."/>
            <person name="Tanikawa S."/>
            <person name="Fujita N."/>
            <person name="Harayama S."/>
        </authorList>
    </citation>
    <scope>NUCLEOTIDE SEQUENCE [LARGE SCALE GENOMIC DNA]</scope>
    <source>
        <strain>B4</strain>
    </source>
</reference>
<name>WHIA_RHOOB</name>
<proteinExistence type="inferred from homology"/>
<feature type="chain" id="PRO_1000184858" description="Probable cell division protein WhiA">
    <location>
        <begin position="1"/>
        <end position="327"/>
    </location>
</feature>
<feature type="DNA-binding region" description="H-T-H motif" evidence="2">
    <location>
        <begin position="275"/>
        <end position="308"/>
    </location>
</feature>
<feature type="region of interest" description="Disordered" evidence="3">
    <location>
        <begin position="306"/>
        <end position="327"/>
    </location>
</feature>